<organism>
    <name type="scientific">Oryza sativa subsp. japonica</name>
    <name type="common">Rice</name>
    <dbReference type="NCBI Taxonomy" id="39947"/>
    <lineage>
        <taxon>Eukaryota</taxon>
        <taxon>Viridiplantae</taxon>
        <taxon>Streptophyta</taxon>
        <taxon>Embryophyta</taxon>
        <taxon>Tracheophyta</taxon>
        <taxon>Spermatophyta</taxon>
        <taxon>Magnoliopsida</taxon>
        <taxon>Liliopsida</taxon>
        <taxon>Poales</taxon>
        <taxon>Poaceae</taxon>
        <taxon>BOP clade</taxon>
        <taxon>Oryzoideae</taxon>
        <taxon>Oryzeae</taxon>
        <taxon>Oryzinae</taxon>
        <taxon>Oryza</taxon>
        <taxon>Oryza sativa</taxon>
    </lineage>
</organism>
<reference key="1">
    <citation type="journal article" date="2002" name="Nature">
        <title>Sequence and analysis of rice chromosome 4.</title>
        <authorList>
            <person name="Feng Q."/>
            <person name="Zhang Y."/>
            <person name="Hao P."/>
            <person name="Wang S."/>
            <person name="Fu G."/>
            <person name="Huang Y."/>
            <person name="Li Y."/>
            <person name="Zhu J."/>
            <person name="Liu Y."/>
            <person name="Hu X."/>
            <person name="Jia P."/>
            <person name="Zhang Y."/>
            <person name="Zhao Q."/>
            <person name="Ying K."/>
            <person name="Yu S."/>
            <person name="Tang Y."/>
            <person name="Weng Q."/>
            <person name="Zhang L."/>
            <person name="Lu Y."/>
            <person name="Mu J."/>
            <person name="Lu Y."/>
            <person name="Zhang L.S."/>
            <person name="Yu Z."/>
            <person name="Fan D."/>
            <person name="Liu X."/>
            <person name="Lu T."/>
            <person name="Li C."/>
            <person name="Wu Y."/>
            <person name="Sun T."/>
            <person name="Lei H."/>
            <person name="Li T."/>
            <person name="Hu H."/>
            <person name="Guan J."/>
            <person name="Wu M."/>
            <person name="Zhang R."/>
            <person name="Zhou B."/>
            <person name="Chen Z."/>
            <person name="Chen L."/>
            <person name="Jin Z."/>
            <person name="Wang R."/>
            <person name="Yin H."/>
            <person name="Cai Z."/>
            <person name="Ren S."/>
            <person name="Lv G."/>
            <person name="Gu W."/>
            <person name="Zhu G."/>
            <person name="Tu Y."/>
            <person name="Jia J."/>
            <person name="Zhang Y."/>
            <person name="Chen J."/>
            <person name="Kang H."/>
            <person name="Chen X."/>
            <person name="Shao C."/>
            <person name="Sun Y."/>
            <person name="Hu Q."/>
            <person name="Zhang X."/>
            <person name="Zhang W."/>
            <person name="Wang L."/>
            <person name="Ding C."/>
            <person name="Sheng H."/>
            <person name="Gu J."/>
            <person name="Chen S."/>
            <person name="Ni L."/>
            <person name="Zhu F."/>
            <person name="Chen W."/>
            <person name="Lan L."/>
            <person name="Lai Y."/>
            <person name="Cheng Z."/>
            <person name="Gu M."/>
            <person name="Jiang J."/>
            <person name="Li J."/>
            <person name="Hong G."/>
            <person name="Xue Y."/>
            <person name="Han B."/>
        </authorList>
    </citation>
    <scope>NUCLEOTIDE SEQUENCE [LARGE SCALE GENOMIC DNA]</scope>
    <source>
        <strain>cv. Nipponbare</strain>
    </source>
</reference>
<reference key="2">
    <citation type="journal article" date="2005" name="Nature">
        <title>The map-based sequence of the rice genome.</title>
        <authorList>
            <consortium name="International rice genome sequencing project (IRGSP)"/>
        </authorList>
    </citation>
    <scope>NUCLEOTIDE SEQUENCE [LARGE SCALE GENOMIC DNA]</scope>
    <source>
        <strain>cv. Nipponbare</strain>
    </source>
</reference>
<reference key="3">
    <citation type="journal article" date="2008" name="Nucleic Acids Res.">
        <title>The rice annotation project database (RAP-DB): 2008 update.</title>
        <authorList>
            <consortium name="The rice annotation project (RAP)"/>
        </authorList>
    </citation>
    <scope>GENOME REANNOTATION</scope>
    <source>
        <strain>cv. Nipponbare</strain>
    </source>
</reference>
<reference key="4">
    <citation type="journal article" date="2013" name="Rice">
        <title>Improvement of the Oryza sativa Nipponbare reference genome using next generation sequence and optical map data.</title>
        <authorList>
            <person name="Kawahara Y."/>
            <person name="de la Bastide M."/>
            <person name="Hamilton J.P."/>
            <person name="Kanamori H."/>
            <person name="McCombie W.R."/>
            <person name="Ouyang S."/>
            <person name="Schwartz D.C."/>
            <person name="Tanaka T."/>
            <person name="Wu J."/>
            <person name="Zhou S."/>
            <person name="Childs K.L."/>
            <person name="Davidson R.M."/>
            <person name="Lin H."/>
            <person name="Quesada-Ocampo L."/>
            <person name="Vaillancourt B."/>
            <person name="Sakai H."/>
            <person name="Lee S.S."/>
            <person name="Kim J."/>
            <person name="Numa H."/>
            <person name="Itoh T."/>
            <person name="Buell C.R."/>
            <person name="Matsumoto T."/>
        </authorList>
    </citation>
    <scope>GENOME REANNOTATION</scope>
    <source>
        <strain>cv. Nipponbare</strain>
    </source>
</reference>
<reference key="5">
    <citation type="journal article" date="2005" name="PLoS Biol.">
        <title>The genomes of Oryza sativa: a history of duplications.</title>
        <authorList>
            <person name="Yu J."/>
            <person name="Wang J."/>
            <person name="Lin W."/>
            <person name="Li S."/>
            <person name="Li H."/>
            <person name="Zhou J."/>
            <person name="Ni P."/>
            <person name="Dong W."/>
            <person name="Hu S."/>
            <person name="Zeng C."/>
            <person name="Zhang J."/>
            <person name="Zhang Y."/>
            <person name="Li R."/>
            <person name="Xu Z."/>
            <person name="Li S."/>
            <person name="Li X."/>
            <person name="Zheng H."/>
            <person name="Cong L."/>
            <person name="Lin L."/>
            <person name="Yin J."/>
            <person name="Geng J."/>
            <person name="Li G."/>
            <person name="Shi J."/>
            <person name="Liu J."/>
            <person name="Lv H."/>
            <person name="Li J."/>
            <person name="Wang J."/>
            <person name="Deng Y."/>
            <person name="Ran L."/>
            <person name="Shi X."/>
            <person name="Wang X."/>
            <person name="Wu Q."/>
            <person name="Li C."/>
            <person name="Ren X."/>
            <person name="Wang J."/>
            <person name="Wang X."/>
            <person name="Li D."/>
            <person name="Liu D."/>
            <person name="Zhang X."/>
            <person name="Ji Z."/>
            <person name="Zhao W."/>
            <person name="Sun Y."/>
            <person name="Zhang Z."/>
            <person name="Bao J."/>
            <person name="Han Y."/>
            <person name="Dong L."/>
            <person name="Ji J."/>
            <person name="Chen P."/>
            <person name="Wu S."/>
            <person name="Liu J."/>
            <person name="Xiao Y."/>
            <person name="Bu D."/>
            <person name="Tan J."/>
            <person name="Yang L."/>
            <person name="Ye C."/>
            <person name="Zhang J."/>
            <person name="Xu J."/>
            <person name="Zhou Y."/>
            <person name="Yu Y."/>
            <person name="Zhang B."/>
            <person name="Zhuang S."/>
            <person name="Wei H."/>
            <person name="Liu B."/>
            <person name="Lei M."/>
            <person name="Yu H."/>
            <person name="Li Y."/>
            <person name="Xu H."/>
            <person name="Wei S."/>
            <person name="He X."/>
            <person name="Fang L."/>
            <person name="Zhang Z."/>
            <person name="Zhang Y."/>
            <person name="Huang X."/>
            <person name="Su Z."/>
            <person name="Tong W."/>
            <person name="Li J."/>
            <person name="Tong Z."/>
            <person name="Li S."/>
            <person name="Ye J."/>
            <person name="Wang L."/>
            <person name="Fang L."/>
            <person name="Lei T."/>
            <person name="Chen C.-S."/>
            <person name="Chen H.-C."/>
            <person name="Xu Z."/>
            <person name="Li H."/>
            <person name="Huang H."/>
            <person name="Zhang F."/>
            <person name="Xu H."/>
            <person name="Li N."/>
            <person name="Zhao C."/>
            <person name="Li S."/>
            <person name="Dong L."/>
            <person name="Huang Y."/>
            <person name="Li L."/>
            <person name="Xi Y."/>
            <person name="Qi Q."/>
            <person name="Li W."/>
            <person name="Zhang B."/>
            <person name="Hu W."/>
            <person name="Zhang Y."/>
            <person name="Tian X."/>
            <person name="Jiao Y."/>
            <person name="Liang X."/>
            <person name="Jin J."/>
            <person name="Gao L."/>
            <person name="Zheng W."/>
            <person name="Hao B."/>
            <person name="Liu S.-M."/>
            <person name="Wang W."/>
            <person name="Yuan L."/>
            <person name="Cao M."/>
            <person name="McDermott J."/>
            <person name="Samudrala R."/>
            <person name="Wang J."/>
            <person name="Wong G.K.-S."/>
            <person name="Yang H."/>
        </authorList>
    </citation>
    <scope>NUCLEOTIDE SEQUENCE [LARGE SCALE GENOMIC DNA]</scope>
    <source>
        <strain>cv. Nipponbare</strain>
    </source>
</reference>
<reference key="6">
    <citation type="journal article" date="2003" name="Science">
        <title>Collection, mapping, and annotation of over 28,000 cDNA clones from japonica rice.</title>
        <authorList>
            <consortium name="The rice full-length cDNA consortium"/>
        </authorList>
    </citation>
    <scope>NUCLEOTIDE SEQUENCE [LARGE SCALE MRNA]</scope>
    <source>
        <strain>cv. Nipponbare</strain>
    </source>
</reference>
<reference key="7">
    <citation type="journal article" date="2008" name="BMC Genomics">
        <title>Genome-wide analysis of CCCH zinc finger family in Arabidopsis and rice.</title>
        <authorList>
            <person name="Wang D."/>
            <person name="Guo Y."/>
            <person name="Wu C."/>
            <person name="Yang G."/>
            <person name="Li Y."/>
            <person name="Zheng C."/>
        </authorList>
    </citation>
    <scope>NOMENCLATURE</scope>
</reference>
<dbReference type="EC" id="1.3.1.89" evidence="1"/>
<dbReference type="EC" id="1.3.1.-" evidence="3"/>
<dbReference type="EMBL" id="AL606631">
    <property type="protein sequence ID" value="CAE01725.2"/>
    <property type="molecule type" value="Genomic_DNA"/>
</dbReference>
<dbReference type="EMBL" id="AP008210">
    <property type="protein sequence ID" value="BAF13967.1"/>
    <property type="molecule type" value="Genomic_DNA"/>
</dbReference>
<dbReference type="EMBL" id="AP014960">
    <property type="status" value="NOT_ANNOTATED_CDS"/>
    <property type="molecule type" value="Genomic_DNA"/>
</dbReference>
<dbReference type="EMBL" id="CM000141">
    <property type="protein sequence ID" value="EAZ29514.1"/>
    <property type="status" value="ALT_FRAME"/>
    <property type="molecule type" value="Genomic_DNA"/>
</dbReference>
<dbReference type="EMBL" id="AK111699">
    <property type="status" value="NOT_ANNOTATED_CDS"/>
    <property type="molecule type" value="mRNA"/>
</dbReference>
<dbReference type="SMR" id="Q7XT07"/>
<dbReference type="FunCoup" id="Q7XT07">
    <property type="interactions" value="2976"/>
</dbReference>
<dbReference type="STRING" id="39947.Q7XT07"/>
<dbReference type="PaxDb" id="39947-Q7XT07"/>
<dbReference type="KEGG" id="dosa:Os04g0117600"/>
<dbReference type="eggNOG" id="KOG2333">
    <property type="taxonomic scope" value="Eukaryota"/>
</dbReference>
<dbReference type="HOGENOM" id="CLU_013299_7_0_1"/>
<dbReference type="InParanoid" id="Q7XT07"/>
<dbReference type="Proteomes" id="UP000000763">
    <property type="component" value="Chromosome 4"/>
</dbReference>
<dbReference type="Proteomes" id="UP000007752">
    <property type="component" value="Chromosome 4"/>
</dbReference>
<dbReference type="Proteomes" id="UP000059680">
    <property type="component" value="Chromosome 4"/>
</dbReference>
<dbReference type="GO" id="GO:0050660">
    <property type="term" value="F:flavin adenine dinucleotide binding"/>
    <property type="evidence" value="ECO:0007669"/>
    <property type="project" value="InterPro"/>
</dbReference>
<dbReference type="GO" id="GO:0106414">
    <property type="term" value="F:mRNA dihydrouridine synthase activity"/>
    <property type="evidence" value="ECO:0007669"/>
    <property type="project" value="RHEA"/>
</dbReference>
<dbReference type="GO" id="GO:0017150">
    <property type="term" value="F:tRNA dihydrouridine synthase activity"/>
    <property type="evidence" value="ECO:0000318"/>
    <property type="project" value="GO_Central"/>
</dbReference>
<dbReference type="GO" id="GO:0008270">
    <property type="term" value="F:zinc ion binding"/>
    <property type="evidence" value="ECO:0007669"/>
    <property type="project" value="UniProtKB-KW"/>
</dbReference>
<dbReference type="GO" id="GO:0006397">
    <property type="term" value="P:mRNA processing"/>
    <property type="evidence" value="ECO:0007669"/>
    <property type="project" value="UniProtKB-KW"/>
</dbReference>
<dbReference type="CDD" id="cd02801">
    <property type="entry name" value="DUS_like_FMN"/>
    <property type="match status" value="1"/>
</dbReference>
<dbReference type="FunFam" id="3.20.20.70:FF:000067">
    <property type="entry name" value="tRNA-dihydrouridine(47) synthase [NAD(P)(+)]"/>
    <property type="match status" value="1"/>
</dbReference>
<dbReference type="FunFam" id="4.10.1000.10:FF:000029">
    <property type="entry name" value="tRNA-dihydrouridine(47) synthase [NAD(P)(+)]"/>
    <property type="match status" value="1"/>
</dbReference>
<dbReference type="Gene3D" id="3.20.20.70">
    <property type="entry name" value="Aldolase class I"/>
    <property type="match status" value="1"/>
</dbReference>
<dbReference type="Gene3D" id="4.10.1000.10">
    <property type="entry name" value="Zinc finger, CCCH-type"/>
    <property type="match status" value="1"/>
</dbReference>
<dbReference type="InterPro" id="IPR013785">
    <property type="entry name" value="Aldolase_TIM"/>
</dbReference>
<dbReference type="InterPro" id="IPR035587">
    <property type="entry name" value="DUS-like_FMN-bd"/>
</dbReference>
<dbReference type="InterPro" id="IPR018517">
    <property type="entry name" value="tRNA_hU_synthase_CS"/>
</dbReference>
<dbReference type="InterPro" id="IPR000571">
    <property type="entry name" value="Znf_CCCH"/>
</dbReference>
<dbReference type="PANTHER" id="PTHR45846">
    <property type="entry name" value="TRNA-DIHYDROURIDINE(47) SYNTHASE [NAD(P)(+)]-LIKE"/>
    <property type="match status" value="1"/>
</dbReference>
<dbReference type="PANTHER" id="PTHR45846:SF1">
    <property type="entry name" value="TRNA-DIHYDROURIDINE(47) SYNTHASE [NAD(P)(+)]-LIKE"/>
    <property type="match status" value="1"/>
</dbReference>
<dbReference type="Pfam" id="PF01207">
    <property type="entry name" value="Dus"/>
    <property type="match status" value="1"/>
</dbReference>
<dbReference type="SUPFAM" id="SSF51395">
    <property type="entry name" value="FMN-linked oxidoreductases"/>
    <property type="match status" value="1"/>
</dbReference>
<dbReference type="PROSITE" id="PS01136">
    <property type="entry name" value="UPF0034"/>
    <property type="match status" value="1"/>
</dbReference>
<dbReference type="PROSITE" id="PS50103">
    <property type="entry name" value="ZF_C3H1"/>
    <property type="match status" value="1"/>
</dbReference>
<sequence>MAATAAAAAAAPPADPPDSSPAASSPPRPSPEELVARAVAPVKPAFLRPPLSATPPKDEGKANGGGAVVAEKKSKRQLKRERKQEQKSSSHLCIEVGKSGNVSSCKYGDSCRFSHDIDAYLAQKPADLEGTCPFTNLDQLCPYGLTCRFLGTHKDIHAASGNLSEKHEINALNKDIQKLLWKNKYKFPKASAQIKLLGLKEVIKSKPDAANDDKKVNHDNLDGNDDENKEPLCNPPVNAECDSTLCEELDRSEGEPLIDNSIPCVEPRPTKKSKVESDEIDKHGAGTLNTNTESEDPNLSNGLEPSNNSSSCRTDLITTPHLREKKIIDFREKLYLAPLTTVGNLPFRRLCKTLGADITCGEMAMCTNLLQGQASEWALLRRHSSEDLFGVQICGAYPDTVARTVELVDNECSVDFIDINMGCPIDIVVNKGAGSSLLTKPMRIKSIVQAASTVTEKPLTVKVRTAFFEGRNRADSIVSDIYDWGASAITVHGRSRQQRYSKLADWDYIYQCAQKAPDQLHVVGNGDVFSFTDWNKHVSGCSKISTSMIARGALIKPWIFTEVKEQRHWDITSGERFNILKDFVSFGLEHWGSDSKGVETTRYFLLEWLSYTCRYIPVGLLDVIPQRLNWRPPSYCGRDDLETLMISDSAADWIRISEMLLGKVPEGFTFTPKHKSNAYDRAENG</sequence>
<comment type="function">
    <text evidence="1 3">Catalyzes the synthesis of dihydrouridine, a modified base found in the D-loop of most tRNAs. Specifically modifies U47 in cytoplasmic tRNAs (By similarity). Catalyzes the synthesis of dihydrouridine in some mRNAs, thereby affecting their translation (By similarity).</text>
</comment>
<comment type="catalytic activity">
    <reaction evidence="1">
        <text>5,6-dihydrouridine(47) in tRNA + NAD(+) = uridine(47) in tRNA + NADH + H(+)</text>
        <dbReference type="Rhea" id="RHEA:53364"/>
        <dbReference type="Rhea" id="RHEA-COMP:13539"/>
        <dbReference type="Rhea" id="RHEA-COMP:13540"/>
        <dbReference type="ChEBI" id="CHEBI:15378"/>
        <dbReference type="ChEBI" id="CHEBI:57540"/>
        <dbReference type="ChEBI" id="CHEBI:57945"/>
        <dbReference type="ChEBI" id="CHEBI:65315"/>
        <dbReference type="ChEBI" id="CHEBI:74443"/>
        <dbReference type="EC" id="1.3.1.89"/>
    </reaction>
    <physiologicalReaction direction="right-to-left" evidence="1">
        <dbReference type="Rhea" id="RHEA:53366"/>
    </physiologicalReaction>
</comment>
<comment type="catalytic activity">
    <reaction evidence="1">
        <text>5,6-dihydrouridine(47) in tRNA + NADP(+) = uridine(47) in tRNA + NADPH + H(+)</text>
        <dbReference type="Rhea" id="RHEA:53360"/>
        <dbReference type="Rhea" id="RHEA-COMP:13539"/>
        <dbReference type="Rhea" id="RHEA-COMP:13540"/>
        <dbReference type="ChEBI" id="CHEBI:15378"/>
        <dbReference type="ChEBI" id="CHEBI:57783"/>
        <dbReference type="ChEBI" id="CHEBI:58349"/>
        <dbReference type="ChEBI" id="CHEBI:65315"/>
        <dbReference type="ChEBI" id="CHEBI:74443"/>
        <dbReference type="EC" id="1.3.1.89"/>
    </reaction>
    <physiologicalReaction direction="right-to-left" evidence="1">
        <dbReference type="Rhea" id="RHEA:53362"/>
    </physiologicalReaction>
</comment>
<comment type="catalytic activity">
    <reaction evidence="3">
        <text>a 5,6-dihydrouridine in mRNA + NAD(+) = a uridine in mRNA + NADH + H(+)</text>
        <dbReference type="Rhea" id="RHEA:69851"/>
        <dbReference type="Rhea" id="RHEA-COMP:14658"/>
        <dbReference type="Rhea" id="RHEA-COMP:17789"/>
        <dbReference type="ChEBI" id="CHEBI:15378"/>
        <dbReference type="ChEBI" id="CHEBI:57540"/>
        <dbReference type="ChEBI" id="CHEBI:57945"/>
        <dbReference type="ChEBI" id="CHEBI:65315"/>
        <dbReference type="ChEBI" id="CHEBI:74443"/>
    </reaction>
    <physiologicalReaction direction="right-to-left" evidence="3">
        <dbReference type="Rhea" id="RHEA:69853"/>
    </physiologicalReaction>
</comment>
<comment type="catalytic activity">
    <reaction evidence="3">
        <text>a 5,6-dihydrouridine in mRNA + NADP(+) = a uridine in mRNA + NADPH + H(+)</text>
        <dbReference type="Rhea" id="RHEA:69855"/>
        <dbReference type="Rhea" id="RHEA-COMP:14658"/>
        <dbReference type="Rhea" id="RHEA-COMP:17789"/>
        <dbReference type="ChEBI" id="CHEBI:15378"/>
        <dbReference type="ChEBI" id="CHEBI:57783"/>
        <dbReference type="ChEBI" id="CHEBI:58349"/>
        <dbReference type="ChEBI" id="CHEBI:65315"/>
        <dbReference type="ChEBI" id="CHEBI:74443"/>
    </reaction>
    <physiologicalReaction direction="right-to-left" evidence="3">
        <dbReference type="Rhea" id="RHEA:69857"/>
    </physiologicalReaction>
</comment>
<comment type="cofactor">
    <cofactor evidence="2">
        <name>FMN</name>
        <dbReference type="ChEBI" id="CHEBI:58210"/>
    </cofactor>
</comment>
<comment type="similarity">
    <text evidence="6">Belongs to the Dus family. Dus3 subfamily.</text>
</comment>
<comment type="sequence caution" evidence="6">
    <conflict type="frameshift">
        <sequence resource="EMBL" id="AK111699"/>
    </conflict>
</comment>
<comment type="sequence caution" evidence="6">
    <conflict type="frameshift">
        <sequence resource="EMBL-CDS" id="EAZ29514"/>
    </conflict>
</comment>
<evidence type="ECO:0000250" key="1">
    <source>
        <dbReference type="UniProtKB" id="Q06053"/>
    </source>
</evidence>
<evidence type="ECO:0000250" key="2">
    <source>
        <dbReference type="UniProtKB" id="Q5SMC7"/>
    </source>
</evidence>
<evidence type="ECO:0000250" key="3">
    <source>
        <dbReference type="UniProtKB" id="Q9UTH9"/>
    </source>
</evidence>
<evidence type="ECO:0000255" key="4">
    <source>
        <dbReference type="PROSITE-ProRule" id="PRU00723"/>
    </source>
</evidence>
<evidence type="ECO:0000256" key="5">
    <source>
        <dbReference type="SAM" id="MobiDB-lite"/>
    </source>
</evidence>
<evidence type="ECO:0000305" key="6"/>
<proteinExistence type="evidence at transcript level"/>
<name>DUS3L_ORYSJ</name>
<accession>Q7XT07</accession>
<accession>A3AQC5</accession>
<gene>
    <name type="ordered locus">Os04g0117600</name>
    <name type="ordered locus">LOC_Os04g02730</name>
    <name type="ORF">OsJ_012997</name>
    <name type="ORF">OSJNBb0050O03.15</name>
</gene>
<keyword id="KW-0285">Flavoprotein</keyword>
<keyword id="KW-0288">FMN</keyword>
<keyword id="KW-0479">Metal-binding</keyword>
<keyword id="KW-0507">mRNA processing</keyword>
<keyword id="KW-0520">NAD</keyword>
<keyword id="KW-0521">NADP</keyword>
<keyword id="KW-0560">Oxidoreductase</keyword>
<keyword id="KW-1185">Reference proteome</keyword>
<keyword id="KW-0677">Repeat</keyword>
<keyword id="KW-0819">tRNA processing</keyword>
<keyword id="KW-0862">Zinc</keyword>
<keyword id="KW-0863">Zinc-finger</keyword>
<protein>
    <recommendedName>
        <fullName>tRNA-dihydrouridine(47) synthase [NAD(P)(+)]-like</fullName>
        <ecNumber evidence="1">1.3.1.89</ecNumber>
    </recommendedName>
    <alternativeName>
        <fullName>Zinc finger CCCH domain-containing protein 26</fullName>
        <shortName>OsC3H26</shortName>
    </alternativeName>
    <alternativeName>
        <fullName>mRNA-dihydrouridine synthase DUS3 homolog</fullName>
        <ecNumber evidence="3">1.3.1.-</ecNumber>
    </alternativeName>
    <alternativeName>
        <fullName>tRNA-dihydrouridine synthase 3-like</fullName>
    </alternativeName>
</protein>
<feature type="chain" id="PRO_0000346797" description="tRNA-dihydrouridine(47) synthase [NAD(P)(+)]-like">
    <location>
        <begin position="1"/>
        <end position="685"/>
    </location>
</feature>
<feature type="zinc finger region" description="C3H1-type" evidence="4">
    <location>
        <begin position="87"/>
        <end position="118"/>
    </location>
</feature>
<feature type="region of interest" description="Disordered" evidence="5">
    <location>
        <begin position="1"/>
        <end position="91"/>
    </location>
</feature>
<feature type="region of interest" description="Disordered" evidence="5">
    <location>
        <begin position="209"/>
        <end position="234"/>
    </location>
</feature>
<feature type="region of interest" description="Disordered" evidence="5">
    <location>
        <begin position="257"/>
        <end position="314"/>
    </location>
</feature>
<feature type="compositionally biased region" description="Low complexity" evidence="5">
    <location>
        <begin position="1"/>
        <end position="12"/>
    </location>
</feature>
<feature type="compositionally biased region" description="Pro residues" evidence="5">
    <location>
        <begin position="13"/>
        <end position="29"/>
    </location>
</feature>
<feature type="compositionally biased region" description="Basic and acidic residues" evidence="5">
    <location>
        <begin position="209"/>
        <end position="221"/>
    </location>
</feature>
<feature type="compositionally biased region" description="Basic and acidic residues" evidence="5">
    <location>
        <begin position="273"/>
        <end position="284"/>
    </location>
</feature>
<feature type="compositionally biased region" description="Polar residues" evidence="5">
    <location>
        <begin position="287"/>
        <end position="314"/>
    </location>
</feature>
<feature type="active site" description="Proton donor" evidence="2">
    <location>
        <position position="423"/>
    </location>
</feature>
<feature type="binding site" evidence="2">
    <location>
        <begin position="338"/>
        <end position="340"/>
    </location>
    <ligand>
        <name>FMN</name>
        <dbReference type="ChEBI" id="CHEBI:58210"/>
    </ligand>
</feature>
<feature type="binding site" evidence="2">
    <location>
        <position position="392"/>
    </location>
    <ligand>
        <name>FMN</name>
        <dbReference type="ChEBI" id="CHEBI:58210"/>
    </ligand>
</feature>
<feature type="binding site" evidence="2">
    <location>
        <position position="462"/>
    </location>
    <ligand>
        <name>FMN</name>
        <dbReference type="ChEBI" id="CHEBI:58210"/>
    </ligand>
</feature>
<feature type="binding site" evidence="2">
    <location>
        <position position="492"/>
    </location>
    <ligand>
        <name>FMN</name>
        <dbReference type="ChEBI" id="CHEBI:58210"/>
    </ligand>
</feature>
<feature type="binding site" evidence="2">
    <location>
        <begin position="525"/>
        <end position="527"/>
    </location>
    <ligand>
        <name>FMN</name>
        <dbReference type="ChEBI" id="CHEBI:58210"/>
    </ligand>
</feature>
<feature type="binding site" evidence="2">
    <location>
        <begin position="550"/>
        <end position="551"/>
    </location>
    <ligand>
        <name>FMN</name>
        <dbReference type="ChEBI" id="CHEBI:58210"/>
    </ligand>
</feature>
<feature type="sequence conflict" description="In Ref. 5; EAZ29514." evidence="6" ref="5">
    <original>T</original>
    <variation>N</variation>
    <location>
        <position position="4"/>
    </location>
</feature>